<accession>A0KJJ1</accession>
<gene>
    <name evidence="1" type="primary">rpmE2</name>
    <name type="ordered locus">AHA_1911</name>
</gene>
<sequence>MRPDIHPEYRQVLFHDLTANTYFLVGSTLKTDRTKLWEDGNTYPYVTLDVSSASHPFYTGKQKQVSKEGQVARFGQRFGQFFNKGKAQS</sequence>
<organism>
    <name type="scientific">Aeromonas hydrophila subsp. hydrophila (strain ATCC 7966 / DSM 30187 / BCRC 13018 / CCUG 14551 / JCM 1027 / KCTC 2358 / NCIMB 9240 / NCTC 8049)</name>
    <dbReference type="NCBI Taxonomy" id="380703"/>
    <lineage>
        <taxon>Bacteria</taxon>
        <taxon>Pseudomonadati</taxon>
        <taxon>Pseudomonadota</taxon>
        <taxon>Gammaproteobacteria</taxon>
        <taxon>Aeromonadales</taxon>
        <taxon>Aeromonadaceae</taxon>
        <taxon>Aeromonas</taxon>
    </lineage>
</organism>
<proteinExistence type="inferred from homology"/>
<protein>
    <recommendedName>
        <fullName evidence="1">Large ribosomal subunit protein bL31B</fullName>
    </recommendedName>
    <alternativeName>
        <fullName evidence="2">50S ribosomal protein L31 type B</fullName>
    </alternativeName>
</protein>
<keyword id="KW-1185">Reference proteome</keyword>
<keyword id="KW-0687">Ribonucleoprotein</keyword>
<keyword id="KW-0689">Ribosomal protein</keyword>
<evidence type="ECO:0000255" key="1">
    <source>
        <dbReference type="HAMAP-Rule" id="MF_00502"/>
    </source>
</evidence>
<evidence type="ECO:0000305" key="2"/>
<name>RL31B_AERHH</name>
<feature type="chain" id="PRO_1000014679" description="Large ribosomal subunit protein bL31B">
    <location>
        <begin position="1"/>
        <end position="89"/>
    </location>
</feature>
<comment type="subunit">
    <text evidence="1">Part of the 50S ribosomal subunit.</text>
</comment>
<comment type="similarity">
    <text evidence="1">Belongs to the bacterial ribosomal protein bL31 family. Type B subfamily.</text>
</comment>
<dbReference type="EMBL" id="CP000462">
    <property type="protein sequence ID" value="ABK39695.1"/>
    <property type="molecule type" value="Genomic_DNA"/>
</dbReference>
<dbReference type="RefSeq" id="WP_010634187.1">
    <property type="nucleotide sequence ID" value="NC_008570.1"/>
</dbReference>
<dbReference type="RefSeq" id="YP_856442.1">
    <property type="nucleotide sequence ID" value="NC_008570.1"/>
</dbReference>
<dbReference type="SMR" id="A0KJJ1"/>
<dbReference type="STRING" id="380703.AHA_1911"/>
<dbReference type="EnsemblBacteria" id="ABK39695">
    <property type="protein sequence ID" value="ABK39695"/>
    <property type="gene ID" value="AHA_1911"/>
</dbReference>
<dbReference type="GeneID" id="4490368"/>
<dbReference type="KEGG" id="aha:AHA_1911"/>
<dbReference type="PATRIC" id="fig|380703.7.peg.1925"/>
<dbReference type="eggNOG" id="COG0254">
    <property type="taxonomic scope" value="Bacteria"/>
</dbReference>
<dbReference type="HOGENOM" id="CLU_114306_2_2_6"/>
<dbReference type="OrthoDB" id="9803251at2"/>
<dbReference type="Proteomes" id="UP000000756">
    <property type="component" value="Chromosome"/>
</dbReference>
<dbReference type="GO" id="GO:1990904">
    <property type="term" value="C:ribonucleoprotein complex"/>
    <property type="evidence" value="ECO:0007669"/>
    <property type="project" value="UniProtKB-KW"/>
</dbReference>
<dbReference type="GO" id="GO:0005840">
    <property type="term" value="C:ribosome"/>
    <property type="evidence" value="ECO:0007669"/>
    <property type="project" value="UniProtKB-KW"/>
</dbReference>
<dbReference type="GO" id="GO:0003735">
    <property type="term" value="F:structural constituent of ribosome"/>
    <property type="evidence" value="ECO:0007669"/>
    <property type="project" value="InterPro"/>
</dbReference>
<dbReference type="GO" id="GO:0006412">
    <property type="term" value="P:translation"/>
    <property type="evidence" value="ECO:0007669"/>
    <property type="project" value="UniProtKB-UniRule"/>
</dbReference>
<dbReference type="Gene3D" id="4.10.830.30">
    <property type="entry name" value="Ribosomal protein L31"/>
    <property type="match status" value="1"/>
</dbReference>
<dbReference type="HAMAP" id="MF_00502">
    <property type="entry name" value="Ribosomal_bL31_2"/>
    <property type="match status" value="1"/>
</dbReference>
<dbReference type="InterPro" id="IPR034704">
    <property type="entry name" value="Ribosomal_bL28/bL31-like_sf"/>
</dbReference>
<dbReference type="InterPro" id="IPR002150">
    <property type="entry name" value="Ribosomal_bL31"/>
</dbReference>
<dbReference type="InterPro" id="IPR027493">
    <property type="entry name" value="Ribosomal_bL31_B"/>
</dbReference>
<dbReference type="InterPro" id="IPR042105">
    <property type="entry name" value="Ribosomal_bL31_sf"/>
</dbReference>
<dbReference type="NCBIfam" id="TIGR00105">
    <property type="entry name" value="L31"/>
    <property type="match status" value="1"/>
</dbReference>
<dbReference type="NCBIfam" id="NF002462">
    <property type="entry name" value="PRK01678.1"/>
    <property type="match status" value="1"/>
</dbReference>
<dbReference type="PANTHER" id="PTHR33280">
    <property type="entry name" value="50S RIBOSOMAL PROTEIN L31, CHLOROPLASTIC"/>
    <property type="match status" value="1"/>
</dbReference>
<dbReference type="PANTHER" id="PTHR33280:SF1">
    <property type="entry name" value="LARGE RIBOSOMAL SUBUNIT PROTEIN BL31C"/>
    <property type="match status" value="1"/>
</dbReference>
<dbReference type="Pfam" id="PF01197">
    <property type="entry name" value="Ribosomal_L31"/>
    <property type="match status" value="1"/>
</dbReference>
<dbReference type="PRINTS" id="PR01249">
    <property type="entry name" value="RIBOSOMALL31"/>
</dbReference>
<dbReference type="SUPFAM" id="SSF143800">
    <property type="entry name" value="L28p-like"/>
    <property type="match status" value="1"/>
</dbReference>
<dbReference type="PROSITE" id="PS01143">
    <property type="entry name" value="RIBOSOMAL_L31"/>
    <property type="match status" value="1"/>
</dbReference>
<reference key="1">
    <citation type="journal article" date="2006" name="J. Bacteriol.">
        <title>Genome sequence of Aeromonas hydrophila ATCC 7966T: jack of all trades.</title>
        <authorList>
            <person name="Seshadri R."/>
            <person name="Joseph S.W."/>
            <person name="Chopra A.K."/>
            <person name="Sha J."/>
            <person name="Shaw J."/>
            <person name="Graf J."/>
            <person name="Haft D.H."/>
            <person name="Wu M."/>
            <person name="Ren Q."/>
            <person name="Rosovitz M.J."/>
            <person name="Madupu R."/>
            <person name="Tallon L."/>
            <person name="Kim M."/>
            <person name="Jin S."/>
            <person name="Vuong H."/>
            <person name="Stine O.C."/>
            <person name="Ali A."/>
            <person name="Horneman A.J."/>
            <person name="Heidelberg J.F."/>
        </authorList>
    </citation>
    <scope>NUCLEOTIDE SEQUENCE [LARGE SCALE GENOMIC DNA]</scope>
    <source>
        <strain>ATCC 7966 / DSM 30187 / BCRC 13018 / CCUG 14551 / JCM 1027 / KCTC 2358 / NCIMB 9240 / NCTC 8049</strain>
    </source>
</reference>